<accession>Q8DUI9</accession>
<organism>
    <name type="scientific">Streptococcus mutans serotype c (strain ATCC 700610 / UA159)</name>
    <dbReference type="NCBI Taxonomy" id="210007"/>
    <lineage>
        <taxon>Bacteria</taxon>
        <taxon>Bacillati</taxon>
        <taxon>Bacillota</taxon>
        <taxon>Bacilli</taxon>
        <taxon>Lactobacillales</taxon>
        <taxon>Streptococcaceae</taxon>
        <taxon>Streptococcus</taxon>
    </lineage>
</organism>
<feature type="chain" id="PRO_0000134430" description="Isopentenyl-diphosphate delta-isomerase">
    <location>
        <begin position="1"/>
        <end position="331"/>
    </location>
</feature>
<feature type="binding site" evidence="1">
    <location>
        <begin position="4"/>
        <end position="5"/>
    </location>
    <ligand>
        <name>substrate</name>
    </ligand>
</feature>
<feature type="binding site" evidence="1">
    <location>
        <begin position="59"/>
        <end position="61"/>
    </location>
    <ligand>
        <name>FMN</name>
        <dbReference type="ChEBI" id="CHEBI:58210"/>
    </ligand>
</feature>
<feature type="binding site" evidence="1">
    <location>
        <position position="89"/>
    </location>
    <ligand>
        <name>FMN</name>
        <dbReference type="ChEBI" id="CHEBI:58210"/>
    </ligand>
</feature>
<feature type="binding site" evidence="1">
    <location>
        <position position="116"/>
    </location>
    <ligand>
        <name>FMN</name>
        <dbReference type="ChEBI" id="CHEBI:58210"/>
    </ligand>
</feature>
<feature type="binding site" evidence="1">
    <location>
        <position position="146"/>
    </location>
    <ligand>
        <name>substrate</name>
    </ligand>
</feature>
<feature type="binding site" evidence="1">
    <location>
        <position position="147"/>
    </location>
    <ligand>
        <name>Mg(2+)</name>
        <dbReference type="ChEBI" id="CHEBI:18420"/>
    </ligand>
</feature>
<feature type="binding site" evidence="1">
    <location>
        <position position="178"/>
    </location>
    <ligand>
        <name>FMN</name>
        <dbReference type="ChEBI" id="CHEBI:58210"/>
    </ligand>
</feature>
<feature type="binding site" evidence="1">
    <location>
        <position position="203"/>
    </location>
    <ligand>
        <name>FMN</name>
        <dbReference type="ChEBI" id="CHEBI:58210"/>
    </ligand>
</feature>
<feature type="binding site" evidence="1">
    <location>
        <position position="208"/>
    </location>
    <ligand>
        <name>FMN</name>
        <dbReference type="ChEBI" id="CHEBI:58210"/>
    </ligand>
</feature>
<feature type="binding site" evidence="1">
    <location>
        <begin position="252"/>
        <end position="254"/>
    </location>
    <ligand>
        <name>FMN</name>
        <dbReference type="ChEBI" id="CHEBI:58210"/>
    </ligand>
</feature>
<feature type="binding site" evidence="1">
    <location>
        <begin position="273"/>
        <end position="274"/>
    </location>
    <ligand>
        <name>FMN</name>
        <dbReference type="ChEBI" id="CHEBI:58210"/>
    </ligand>
</feature>
<feature type="helix" evidence="3">
    <location>
        <begin position="21"/>
        <end position="24"/>
    </location>
</feature>
<feature type="strand" evidence="3">
    <location>
        <begin position="25"/>
        <end position="27"/>
    </location>
</feature>
<feature type="helix" evidence="3">
    <location>
        <begin position="37"/>
        <end position="39"/>
    </location>
</feature>
<feature type="strand" evidence="3">
    <location>
        <begin position="44"/>
        <end position="46"/>
    </location>
</feature>
<feature type="strand" evidence="3">
    <location>
        <begin position="49"/>
        <end position="58"/>
    </location>
</feature>
<feature type="helix" evidence="3">
    <location>
        <begin position="68"/>
        <end position="81"/>
    </location>
</feature>
<feature type="strand" evidence="3">
    <location>
        <begin position="113"/>
        <end position="118"/>
    </location>
</feature>
<feature type="helix" evidence="3">
    <location>
        <begin position="123"/>
        <end position="133"/>
    </location>
</feature>
<feature type="strand" evidence="3">
    <location>
        <begin position="138"/>
        <end position="142"/>
    </location>
</feature>
<feature type="helix" evidence="3">
    <location>
        <begin position="144"/>
        <end position="148"/>
    </location>
</feature>
<feature type="strand" evidence="3">
    <location>
        <begin position="150"/>
        <end position="153"/>
    </location>
</feature>
<feature type="helix" evidence="3">
    <location>
        <begin position="158"/>
        <end position="170"/>
    </location>
</feature>
<feature type="strand" evidence="3">
    <location>
        <begin position="175"/>
        <end position="179"/>
    </location>
</feature>
<feature type="helix" evidence="3">
    <location>
        <begin position="186"/>
        <end position="195"/>
    </location>
</feature>
<feature type="strand" evidence="3">
    <location>
        <begin position="199"/>
        <end position="201"/>
    </location>
</feature>
<feature type="helix" evidence="3">
    <location>
        <begin position="222"/>
        <end position="224"/>
    </location>
</feature>
<feature type="helix" evidence="3">
    <location>
        <begin position="231"/>
        <end position="238"/>
    </location>
</feature>
<feature type="helix" evidence="3">
    <location>
        <begin position="239"/>
        <end position="241"/>
    </location>
</feature>
<feature type="turn" evidence="3">
    <location>
        <begin position="242"/>
        <end position="244"/>
    </location>
</feature>
<feature type="strand" evidence="3">
    <location>
        <begin position="245"/>
        <end position="249"/>
    </location>
</feature>
<feature type="helix" evidence="3">
    <location>
        <begin position="256"/>
        <end position="265"/>
    </location>
</feature>
<feature type="strand" evidence="3">
    <location>
        <begin position="268"/>
        <end position="273"/>
    </location>
</feature>
<feature type="helix" evidence="3">
    <location>
        <begin position="274"/>
        <end position="282"/>
    </location>
</feature>
<feature type="helix" evidence="3">
    <location>
        <begin position="285"/>
        <end position="305"/>
    </location>
</feature>
<feature type="helix" evidence="3">
    <location>
        <begin position="312"/>
        <end position="316"/>
    </location>
</feature>
<feature type="strand" evidence="3">
    <location>
        <begin position="319"/>
        <end position="321"/>
    </location>
</feature>
<feature type="helix" evidence="3">
    <location>
        <begin position="323"/>
        <end position="328"/>
    </location>
</feature>
<reference key="1">
    <citation type="journal article" date="2002" name="Proc. Natl. Acad. Sci. U.S.A.">
        <title>Genome sequence of Streptococcus mutans UA159, a cariogenic dental pathogen.</title>
        <authorList>
            <person name="Ajdic D.J."/>
            <person name="McShan W.M."/>
            <person name="McLaughlin R.E."/>
            <person name="Savic G."/>
            <person name="Chang J."/>
            <person name="Carson M.B."/>
            <person name="Primeaux C."/>
            <person name="Tian R."/>
            <person name="Kenton S."/>
            <person name="Jia H.G."/>
            <person name="Lin S.P."/>
            <person name="Qian Y."/>
            <person name="Li S."/>
            <person name="Zhu H."/>
            <person name="Najar F.Z."/>
            <person name="Lai H."/>
            <person name="White J."/>
            <person name="Roe B.A."/>
            <person name="Ferretti J.J."/>
        </authorList>
    </citation>
    <scope>NUCLEOTIDE SEQUENCE [LARGE SCALE GENOMIC DNA]</scope>
    <source>
        <strain>ATCC 700610 / UA159</strain>
    </source>
</reference>
<reference key="2">
    <citation type="submission" date="2011-07" db="PDB data bank">
        <title>Crystal structure of S. Mutans isopentenyl pyrophosph isomerase.</title>
        <authorList>
            <person name="Liu Y.H."/>
            <person name="Fu T.M."/>
            <person name="Liu X."/>
            <person name="Su X.D."/>
        </authorList>
    </citation>
    <scope>X-RAY CRYSTALLOGRAPHY (2.04 ANGSTROMS)</scope>
    <scope>SUBUNIT</scope>
</reference>
<protein>
    <recommendedName>
        <fullName evidence="1">Isopentenyl-diphosphate delta-isomerase</fullName>
        <shortName evidence="1">IPP isomerase</shortName>
        <ecNumber evidence="1">5.3.3.2</ecNumber>
    </recommendedName>
    <alternativeName>
        <fullName evidence="1">Isopentenyl diphosphate:dimethylallyl diphosphate isomerase</fullName>
    </alternativeName>
    <alternativeName>
        <fullName evidence="1">Isopentenyl pyrophosphate isomerase</fullName>
    </alternativeName>
    <alternativeName>
        <fullName evidence="1">Type 2 isopentenyl diphosphate isomerase</fullName>
        <shortName evidence="1">IDI-2</shortName>
    </alternativeName>
</protein>
<name>IDI2_STRMU</name>
<comment type="function">
    <text evidence="1">Involved in the biosynthesis of isoprenoids. Catalyzes the 1,3-allylic rearrangement of the homoallylic substrate isopentenyl (IPP) to its allylic isomer, dimethylallyl diphosphate (DMAPP).</text>
</comment>
<comment type="catalytic activity">
    <reaction evidence="1">
        <text>isopentenyl diphosphate = dimethylallyl diphosphate</text>
        <dbReference type="Rhea" id="RHEA:23284"/>
        <dbReference type="ChEBI" id="CHEBI:57623"/>
        <dbReference type="ChEBI" id="CHEBI:128769"/>
        <dbReference type="EC" id="5.3.3.2"/>
    </reaction>
</comment>
<comment type="cofactor">
    <cofactor evidence="1">
        <name>FMN</name>
        <dbReference type="ChEBI" id="CHEBI:58210"/>
    </cofactor>
</comment>
<comment type="cofactor">
    <cofactor evidence="1">
        <name>NADPH</name>
        <dbReference type="ChEBI" id="CHEBI:57783"/>
    </cofactor>
</comment>
<comment type="cofactor">
    <cofactor evidence="1">
        <name>Mg(2+)</name>
        <dbReference type="ChEBI" id="CHEBI:18420"/>
    </cofactor>
</comment>
<comment type="subunit">
    <text evidence="2">Homooctamer. Dimer of tetramers (Probable).</text>
</comment>
<comment type="subcellular location">
    <subcellularLocation>
        <location evidence="1">Cytoplasm</location>
    </subcellularLocation>
</comment>
<comment type="similarity">
    <text evidence="1">Belongs to the IPP isomerase type 2 family.</text>
</comment>
<proteinExistence type="evidence at protein level"/>
<keyword id="KW-0002">3D-structure</keyword>
<keyword id="KW-0963">Cytoplasm</keyword>
<keyword id="KW-0285">Flavoprotein</keyword>
<keyword id="KW-0288">FMN</keyword>
<keyword id="KW-0413">Isomerase</keyword>
<keyword id="KW-0414">Isoprene biosynthesis</keyword>
<keyword id="KW-0460">Magnesium</keyword>
<keyword id="KW-0479">Metal-binding</keyword>
<keyword id="KW-0521">NADP</keyword>
<keyword id="KW-1185">Reference proteome</keyword>
<dbReference type="EC" id="5.3.3.2" evidence="1"/>
<dbReference type="EMBL" id="AE014133">
    <property type="protein sequence ID" value="AAN58644.1"/>
    <property type="molecule type" value="Genomic_DNA"/>
</dbReference>
<dbReference type="RefSeq" id="NP_721338.1">
    <property type="nucleotide sequence ID" value="NC_004350.2"/>
</dbReference>
<dbReference type="RefSeq" id="WP_002263658.1">
    <property type="nucleotide sequence ID" value="NC_004350.2"/>
</dbReference>
<dbReference type="PDB" id="3SR7">
    <property type="method" value="X-ray"/>
    <property type="resolution" value="2.04 A"/>
    <property type="chains" value="A/B/C/D=1-331"/>
</dbReference>
<dbReference type="PDBsum" id="3SR7"/>
<dbReference type="SMR" id="Q8DUI9"/>
<dbReference type="STRING" id="210007.SMU_939"/>
<dbReference type="KEGG" id="smu:SMU_939"/>
<dbReference type="PATRIC" id="fig|210007.7.peg.837"/>
<dbReference type="eggNOG" id="COG1304">
    <property type="taxonomic scope" value="Bacteria"/>
</dbReference>
<dbReference type="HOGENOM" id="CLU_065515_0_0_9"/>
<dbReference type="OrthoDB" id="9795032at2"/>
<dbReference type="PhylomeDB" id="Q8DUI9"/>
<dbReference type="EvolutionaryTrace" id="Q8DUI9"/>
<dbReference type="Proteomes" id="UP000002512">
    <property type="component" value="Chromosome"/>
</dbReference>
<dbReference type="GO" id="GO:0005737">
    <property type="term" value="C:cytoplasm"/>
    <property type="evidence" value="ECO:0007669"/>
    <property type="project" value="UniProtKB-SubCell"/>
</dbReference>
<dbReference type="GO" id="GO:0010181">
    <property type="term" value="F:FMN binding"/>
    <property type="evidence" value="ECO:0007669"/>
    <property type="project" value="UniProtKB-UniRule"/>
</dbReference>
<dbReference type="GO" id="GO:0004452">
    <property type="term" value="F:isopentenyl-diphosphate delta-isomerase activity"/>
    <property type="evidence" value="ECO:0007669"/>
    <property type="project" value="UniProtKB-UniRule"/>
</dbReference>
<dbReference type="GO" id="GO:0000287">
    <property type="term" value="F:magnesium ion binding"/>
    <property type="evidence" value="ECO:0007669"/>
    <property type="project" value="UniProtKB-UniRule"/>
</dbReference>
<dbReference type="GO" id="GO:0070402">
    <property type="term" value="F:NADPH binding"/>
    <property type="evidence" value="ECO:0007669"/>
    <property type="project" value="UniProtKB-UniRule"/>
</dbReference>
<dbReference type="GO" id="GO:0016491">
    <property type="term" value="F:oxidoreductase activity"/>
    <property type="evidence" value="ECO:0007669"/>
    <property type="project" value="InterPro"/>
</dbReference>
<dbReference type="GO" id="GO:0008299">
    <property type="term" value="P:isoprenoid biosynthetic process"/>
    <property type="evidence" value="ECO:0007669"/>
    <property type="project" value="UniProtKB-UniRule"/>
</dbReference>
<dbReference type="CDD" id="cd02811">
    <property type="entry name" value="IDI-2_FMN"/>
    <property type="match status" value="1"/>
</dbReference>
<dbReference type="Gene3D" id="3.20.20.70">
    <property type="entry name" value="Aldolase class I"/>
    <property type="match status" value="1"/>
</dbReference>
<dbReference type="HAMAP" id="MF_00354">
    <property type="entry name" value="Idi_2"/>
    <property type="match status" value="1"/>
</dbReference>
<dbReference type="InterPro" id="IPR013785">
    <property type="entry name" value="Aldolase_TIM"/>
</dbReference>
<dbReference type="InterPro" id="IPR000262">
    <property type="entry name" value="FMN-dep_DH"/>
</dbReference>
<dbReference type="InterPro" id="IPR011179">
    <property type="entry name" value="IPdP_isomerase"/>
</dbReference>
<dbReference type="NCBIfam" id="TIGR02151">
    <property type="entry name" value="IPP_isom_2"/>
    <property type="match status" value="1"/>
</dbReference>
<dbReference type="PANTHER" id="PTHR43665">
    <property type="entry name" value="ISOPENTENYL-DIPHOSPHATE DELTA-ISOMERASE"/>
    <property type="match status" value="1"/>
</dbReference>
<dbReference type="PANTHER" id="PTHR43665:SF1">
    <property type="entry name" value="ISOPENTENYL-DIPHOSPHATE DELTA-ISOMERASE"/>
    <property type="match status" value="1"/>
</dbReference>
<dbReference type="Pfam" id="PF01070">
    <property type="entry name" value="FMN_dh"/>
    <property type="match status" value="1"/>
</dbReference>
<dbReference type="PIRSF" id="PIRSF003314">
    <property type="entry name" value="IPP_isomerase"/>
    <property type="match status" value="1"/>
</dbReference>
<dbReference type="SUPFAM" id="SSF51395">
    <property type="entry name" value="FMN-linked oxidoreductases"/>
    <property type="match status" value="1"/>
</dbReference>
<gene>
    <name evidence="1" type="primary">fni</name>
    <name type="ordered locus">SMU_939</name>
</gene>
<sequence>MTNRKDDHIKYALDYRSPYNSFDDIELIHHSLPDYDLAEIDLSTHFAGQDFDFPFYINAMTGGSQKGKEVNEKLAQVADTCGLLFVTGSYSTALKNPDDTSYQVKKSRPHLLLATNIGLDKPYQAGLQAVRDLQPLFLQVHINLMQELLMPEGEREFRSWKKHLSDYAKKLQLPFILKEVGFGMDVKTIQTAIDLGVKTVDISGRGGTSFAYIENRRGGNRSYLNQWGQTTAQVLLNAQPLMDKVEILASGGIRHPLDIIKALVLGAKAVGLSRTMLELVEQHSVHEVIAIVNGWKEDLRLIMCALNCQTIAELRNVDYLLYGRLREGQRQ</sequence>
<evidence type="ECO:0000255" key="1">
    <source>
        <dbReference type="HAMAP-Rule" id="MF_00354"/>
    </source>
</evidence>
<evidence type="ECO:0000305" key="2">
    <source ref="2"/>
</evidence>
<evidence type="ECO:0007829" key="3">
    <source>
        <dbReference type="PDB" id="3SR7"/>
    </source>
</evidence>